<keyword id="KW-0067">ATP-binding</keyword>
<keyword id="KW-1003">Cell membrane</keyword>
<keyword id="KW-0472">Membrane</keyword>
<keyword id="KW-0547">Nucleotide-binding</keyword>
<keyword id="KW-1185">Reference proteome</keyword>
<keyword id="KW-1278">Translocase</keyword>
<keyword id="KW-0813">Transport</keyword>
<evidence type="ECO:0000255" key="1">
    <source>
        <dbReference type="HAMAP-Rule" id="MF_01710"/>
    </source>
</evidence>
<name>ECFA2_STRR6</name>
<dbReference type="EC" id="7.-.-.-" evidence="1"/>
<dbReference type="EMBL" id="AE007317">
    <property type="protein sequence ID" value="AAL00827.1"/>
    <property type="molecule type" value="Genomic_DNA"/>
</dbReference>
<dbReference type="PIR" id="F98124">
    <property type="entry name" value="F98124"/>
</dbReference>
<dbReference type="RefSeq" id="NP_359616.1">
    <property type="nucleotide sequence ID" value="NC_003098.1"/>
</dbReference>
<dbReference type="RefSeq" id="WP_000510406.1">
    <property type="nucleotide sequence ID" value="NC_003098.1"/>
</dbReference>
<dbReference type="SMR" id="Q8DMY0"/>
<dbReference type="STRING" id="171101.spr2025"/>
<dbReference type="KEGG" id="spr:spr2025"/>
<dbReference type="PATRIC" id="fig|171101.6.peg.2191"/>
<dbReference type="eggNOG" id="COG1122">
    <property type="taxonomic scope" value="Bacteria"/>
</dbReference>
<dbReference type="HOGENOM" id="CLU_000604_1_22_9"/>
<dbReference type="Proteomes" id="UP000000586">
    <property type="component" value="Chromosome"/>
</dbReference>
<dbReference type="GO" id="GO:0043190">
    <property type="term" value="C:ATP-binding cassette (ABC) transporter complex"/>
    <property type="evidence" value="ECO:0000318"/>
    <property type="project" value="GO_Central"/>
</dbReference>
<dbReference type="GO" id="GO:0005524">
    <property type="term" value="F:ATP binding"/>
    <property type="evidence" value="ECO:0000318"/>
    <property type="project" value="GO_Central"/>
</dbReference>
<dbReference type="GO" id="GO:0016887">
    <property type="term" value="F:ATP hydrolysis activity"/>
    <property type="evidence" value="ECO:0007669"/>
    <property type="project" value="InterPro"/>
</dbReference>
<dbReference type="GO" id="GO:0042626">
    <property type="term" value="F:ATPase-coupled transmembrane transporter activity"/>
    <property type="evidence" value="ECO:0000318"/>
    <property type="project" value="GO_Central"/>
</dbReference>
<dbReference type="CDD" id="cd03225">
    <property type="entry name" value="ABC_cobalt_CbiO_domain1"/>
    <property type="match status" value="1"/>
</dbReference>
<dbReference type="FunFam" id="3.40.50.300:FF:000224">
    <property type="entry name" value="Energy-coupling factor transporter ATP-binding protein EcfA"/>
    <property type="match status" value="1"/>
</dbReference>
<dbReference type="Gene3D" id="3.40.50.300">
    <property type="entry name" value="P-loop containing nucleotide triphosphate hydrolases"/>
    <property type="match status" value="1"/>
</dbReference>
<dbReference type="InterPro" id="IPR003593">
    <property type="entry name" value="AAA+_ATPase"/>
</dbReference>
<dbReference type="InterPro" id="IPR003439">
    <property type="entry name" value="ABC_transporter-like_ATP-bd"/>
</dbReference>
<dbReference type="InterPro" id="IPR017871">
    <property type="entry name" value="ABC_transporter-like_CS"/>
</dbReference>
<dbReference type="InterPro" id="IPR015856">
    <property type="entry name" value="ABC_transpr_CbiO/EcfA_su"/>
</dbReference>
<dbReference type="InterPro" id="IPR050095">
    <property type="entry name" value="ECF_ABC_transporter_ATP-bd"/>
</dbReference>
<dbReference type="InterPro" id="IPR030946">
    <property type="entry name" value="EcfA2"/>
</dbReference>
<dbReference type="InterPro" id="IPR027417">
    <property type="entry name" value="P-loop_NTPase"/>
</dbReference>
<dbReference type="NCBIfam" id="TIGR04521">
    <property type="entry name" value="ECF_ATPase_2"/>
    <property type="match status" value="1"/>
</dbReference>
<dbReference type="PANTHER" id="PTHR43553:SF27">
    <property type="entry name" value="ENERGY-COUPLING FACTOR TRANSPORTER ATP-BINDING PROTEIN ECFA2"/>
    <property type="match status" value="1"/>
</dbReference>
<dbReference type="PANTHER" id="PTHR43553">
    <property type="entry name" value="HEAVY METAL TRANSPORTER"/>
    <property type="match status" value="1"/>
</dbReference>
<dbReference type="Pfam" id="PF00005">
    <property type="entry name" value="ABC_tran"/>
    <property type="match status" value="1"/>
</dbReference>
<dbReference type="SMART" id="SM00382">
    <property type="entry name" value="AAA"/>
    <property type="match status" value="1"/>
</dbReference>
<dbReference type="SUPFAM" id="SSF52540">
    <property type="entry name" value="P-loop containing nucleoside triphosphate hydrolases"/>
    <property type="match status" value="1"/>
</dbReference>
<dbReference type="PROSITE" id="PS00211">
    <property type="entry name" value="ABC_TRANSPORTER_1"/>
    <property type="match status" value="1"/>
</dbReference>
<dbReference type="PROSITE" id="PS50893">
    <property type="entry name" value="ABC_TRANSPORTER_2"/>
    <property type="match status" value="1"/>
</dbReference>
<dbReference type="PROSITE" id="PS51246">
    <property type="entry name" value="CBIO"/>
    <property type="match status" value="1"/>
</dbReference>
<sequence>MGIALENVNFIYQEGTPLASAALSDVSLTIEDGSYTALIGHTGSGKSTILQLLNGLLVPSQGSVRVFDTLITSTSKNKDIRQIRKQVGLVFQFAENQIFEETVLKDVAFGPQNFGVSEEDAVKTAREKLALVGIDESLFDRSPFELSGGQMRRVAIAGILAMEPSILVLDEPTAGLDPLGRKELMTLFKKLHQSGMTIVLVTHLMDDVAEYANQVYVMEKGRLVKGGKPSDVFQDVVFMEEVQLGVPKITAFCKRLADRGVSFKRLPIKIEEFKESLNG</sequence>
<gene>
    <name evidence="1" type="primary">ecfA2</name>
    <name type="synonym">cbiO2</name>
    <name type="ordered locus">spr2025</name>
</gene>
<reference key="1">
    <citation type="journal article" date="2001" name="J. Bacteriol.">
        <title>Genome of the bacterium Streptococcus pneumoniae strain R6.</title>
        <authorList>
            <person name="Hoskins J."/>
            <person name="Alborn W.E. Jr."/>
            <person name="Arnold J."/>
            <person name="Blaszczak L.C."/>
            <person name="Burgett S."/>
            <person name="DeHoff B.S."/>
            <person name="Estrem S.T."/>
            <person name="Fritz L."/>
            <person name="Fu D.-J."/>
            <person name="Fuller W."/>
            <person name="Geringer C."/>
            <person name="Gilmour R."/>
            <person name="Glass J.S."/>
            <person name="Khoja H."/>
            <person name="Kraft A.R."/>
            <person name="Lagace R.E."/>
            <person name="LeBlanc D.J."/>
            <person name="Lee L.N."/>
            <person name="Lefkowitz E.J."/>
            <person name="Lu J."/>
            <person name="Matsushima P."/>
            <person name="McAhren S.M."/>
            <person name="McHenney M."/>
            <person name="McLeaster K."/>
            <person name="Mundy C.W."/>
            <person name="Nicas T.I."/>
            <person name="Norris F.H."/>
            <person name="O'Gara M."/>
            <person name="Peery R.B."/>
            <person name="Robertson G.T."/>
            <person name="Rockey P."/>
            <person name="Sun P.-M."/>
            <person name="Winkler M.E."/>
            <person name="Yang Y."/>
            <person name="Young-Bellido M."/>
            <person name="Zhao G."/>
            <person name="Zook C.A."/>
            <person name="Baltz R.H."/>
            <person name="Jaskunas S.R."/>
            <person name="Rosteck P.R. Jr."/>
            <person name="Skatrud P.L."/>
            <person name="Glass J.I."/>
        </authorList>
    </citation>
    <scope>NUCLEOTIDE SEQUENCE [LARGE SCALE GENOMIC DNA]</scope>
    <source>
        <strain>ATCC BAA-255 / R6</strain>
    </source>
</reference>
<protein>
    <recommendedName>
        <fullName evidence="1">Energy-coupling factor transporter ATP-binding protein EcfA2</fullName>
        <shortName evidence="1">ECF transporter A component EcfA2</shortName>
        <ecNumber evidence="1">7.-.-.-</ecNumber>
    </recommendedName>
</protein>
<organism>
    <name type="scientific">Streptococcus pneumoniae (strain ATCC BAA-255 / R6)</name>
    <dbReference type="NCBI Taxonomy" id="171101"/>
    <lineage>
        <taxon>Bacteria</taxon>
        <taxon>Bacillati</taxon>
        <taxon>Bacillota</taxon>
        <taxon>Bacilli</taxon>
        <taxon>Lactobacillales</taxon>
        <taxon>Streptococcaceae</taxon>
        <taxon>Streptococcus</taxon>
    </lineage>
</organism>
<accession>Q8DMY0</accession>
<proteinExistence type="inferred from homology"/>
<feature type="chain" id="PRO_0000092101" description="Energy-coupling factor transporter ATP-binding protein EcfA2">
    <location>
        <begin position="1"/>
        <end position="279"/>
    </location>
</feature>
<feature type="domain" description="ABC transporter" evidence="1">
    <location>
        <begin position="3"/>
        <end position="245"/>
    </location>
</feature>
<feature type="binding site" evidence="1">
    <location>
        <begin position="40"/>
        <end position="47"/>
    </location>
    <ligand>
        <name>ATP</name>
        <dbReference type="ChEBI" id="CHEBI:30616"/>
    </ligand>
</feature>
<comment type="function">
    <text evidence="1">ATP-binding (A) component of a common energy-coupling factor (ECF) ABC-transporter complex. Unlike classic ABC transporters this ECF transporter provides the energy necessary to transport a number of different substrates.</text>
</comment>
<comment type="subunit">
    <text evidence="1">Forms a stable energy-coupling factor (ECF) transporter complex composed of 2 membrane-embedded substrate-binding proteins (S component), 2 ATP-binding proteins (A component) and 2 transmembrane proteins (T component).</text>
</comment>
<comment type="subcellular location">
    <subcellularLocation>
        <location evidence="1">Cell membrane</location>
        <topology evidence="1">Peripheral membrane protein</topology>
    </subcellularLocation>
</comment>
<comment type="similarity">
    <text evidence="1">Belongs to the ABC transporter superfamily. Energy-coupling factor EcfA family.</text>
</comment>